<evidence type="ECO:0000255" key="1">
    <source>
        <dbReference type="HAMAP-Rule" id="MF_00639"/>
    </source>
</evidence>
<feature type="chain" id="PRO_1000147394" description="UDP-N-acetylmuramoylalanine--D-glutamate ligase">
    <location>
        <begin position="1"/>
        <end position="450"/>
    </location>
</feature>
<feature type="binding site" evidence="1">
    <location>
        <begin position="119"/>
        <end position="125"/>
    </location>
    <ligand>
        <name>ATP</name>
        <dbReference type="ChEBI" id="CHEBI:30616"/>
    </ligand>
</feature>
<name>MURD_BACCQ</name>
<sequence>MKTVTEFQNKNILVLGIAKSGYAAATLLQKLGANVIVNDGKPLAENVLAAELQAKGMDVVCGGHPLELLERNISLVVKNPGIPYSNPILVAAKEKQIPIVTEVELAYRISEAPFVGITGSNGKTTTTMLTFEMLKEGQKHPVIAGNIGTVACEVAQDAKENEVVVTELSSFQLMGVELFQPKIAAFLNLFEAHLDYHGTKKEYGLAKANIFKNQTENDYSVINADDADVMALSAYSKGQKVLFSTTKEIEDGACIKDNALYFKGEKVVEVGDIVLPGQHNLENILAAMSIAKLLGVSNEAITAVLKRFTGVKHRLEYVTTINNRKFYNDSKATNMLATEKALSAFTQPTVLLAGGLDRGNEFDDLIPYFKNVKAIVTFGQTAPKLVRAAEKAGLDTIESVDTLDEAVVKAYAHSTDGDVILLSPACASWDQFKTFEERGDIFIQAVHKLI</sequence>
<comment type="function">
    <text evidence="1">Cell wall formation. Catalyzes the addition of glutamate to the nucleotide precursor UDP-N-acetylmuramoyl-L-alanine (UMA).</text>
</comment>
<comment type="catalytic activity">
    <reaction evidence="1">
        <text>UDP-N-acetyl-alpha-D-muramoyl-L-alanine + D-glutamate + ATP = UDP-N-acetyl-alpha-D-muramoyl-L-alanyl-D-glutamate + ADP + phosphate + H(+)</text>
        <dbReference type="Rhea" id="RHEA:16429"/>
        <dbReference type="ChEBI" id="CHEBI:15378"/>
        <dbReference type="ChEBI" id="CHEBI:29986"/>
        <dbReference type="ChEBI" id="CHEBI:30616"/>
        <dbReference type="ChEBI" id="CHEBI:43474"/>
        <dbReference type="ChEBI" id="CHEBI:83898"/>
        <dbReference type="ChEBI" id="CHEBI:83900"/>
        <dbReference type="ChEBI" id="CHEBI:456216"/>
        <dbReference type="EC" id="6.3.2.9"/>
    </reaction>
</comment>
<comment type="pathway">
    <text evidence="1">Cell wall biogenesis; peptidoglycan biosynthesis.</text>
</comment>
<comment type="subcellular location">
    <subcellularLocation>
        <location evidence="1">Cytoplasm</location>
    </subcellularLocation>
</comment>
<comment type="similarity">
    <text evidence="1">Belongs to the MurCDEF family.</text>
</comment>
<accession>B9IVY9</accession>
<proteinExistence type="inferred from homology"/>
<keyword id="KW-0067">ATP-binding</keyword>
<keyword id="KW-0131">Cell cycle</keyword>
<keyword id="KW-0132">Cell division</keyword>
<keyword id="KW-0133">Cell shape</keyword>
<keyword id="KW-0961">Cell wall biogenesis/degradation</keyword>
<keyword id="KW-0963">Cytoplasm</keyword>
<keyword id="KW-0436">Ligase</keyword>
<keyword id="KW-0547">Nucleotide-binding</keyword>
<keyword id="KW-0573">Peptidoglycan synthesis</keyword>
<dbReference type="EC" id="6.3.2.9" evidence="1"/>
<dbReference type="EMBL" id="CP000227">
    <property type="protein sequence ID" value="ACM14126.1"/>
    <property type="molecule type" value="Genomic_DNA"/>
</dbReference>
<dbReference type="SMR" id="B9IVY9"/>
<dbReference type="KEGG" id="bcq:BCQ_3698"/>
<dbReference type="HOGENOM" id="CLU_032540_0_1_9"/>
<dbReference type="UniPathway" id="UPA00219"/>
<dbReference type="Proteomes" id="UP000000441">
    <property type="component" value="Chromosome"/>
</dbReference>
<dbReference type="GO" id="GO:0005737">
    <property type="term" value="C:cytoplasm"/>
    <property type="evidence" value="ECO:0007669"/>
    <property type="project" value="UniProtKB-SubCell"/>
</dbReference>
<dbReference type="GO" id="GO:0005524">
    <property type="term" value="F:ATP binding"/>
    <property type="evidence" value="ECO:0007669"/>
    <property type="project" value="UniProtKB-UniRule"/>
</dbReference>
<dbReference type="GO" id="GO:0008764">
    <property type="term" value="F:UDP-N-acetylmuramoylalanine-D-glutamate ligase activity"/>
    <property type="evidence" value="ECO:0007669"/>
    <property type="project" value="UniProtKB-UniRule"/>
</dbReference>
<dbReference type="GO" id="GO:0051301">
    <property type="term" value="P:cell division"/>
    <property type="evidence" value="ECO:0007669"/>
    <property type="project" value="UniProtKB-KW"/>
</dbReference>
<dbReference type="GO" id="GO:0071555">
    <property type="term" value="P:cell wall organization"/>
    <property type="evidence" value="ECO:0007669"/>
    <property type="project" value="UniProtKB-KW"/>
</dbReference>
<dbReference type="GO" id="GO:0009252">
    <property type="term" value="P:peptidoglycan biosynthetic process"/>
    <property type="evidence" value="ECO:0007669"/>
    <property type="project" value="UniProtKB-UniRule"/>
</dbReference>
<dbReference type="GO" id="GO:0008360">
    <property type="term" value="P:regulation of cell shape"/>
    <property type="evidence" value="ECO:0007669"/>
    <property type="project" value="UniProtKB-KW"/>
</dbReference>
<dbReference type="Gene3D" id="3.90.190.20">
    <property type="entry name" value="Mur ligase, C-terminal domain"/>
    <property type="match status" value="1"/>
</dbReference>
<dbReference type="Gene3D" id="3.40.1190.10">
    <property type="entry name" value="Mur-like, catalytic domain"/>
    <property type="match status" value="1"/>
</dbReference>
<dbReference type="Gene3D" id="3.40.50.720">
    <property type="entry name" value="NAD(P)-binding Rossmann-like Domain"/>
    <property type="match status" value="1"/>
</dbReference>
<dbReference type="HAMAP" id="MF_00639">
    <property type="entry name" value="MurD"/>
    <property type="match status" value="1"/>
</dbReference>
<dbReference type="InterPro" id="IPR036565">
    <property type="entry name" value="Mur-like_cat_sf"/>
</dbReference>
<dbReference type="InterPro" id="IPR004101">
    <property type="entry name" value="Mur_ligase_C"/>
</dbReference>
<dbReference type="InterPro" id="IPR036615">
    <property type="entry name" value="Mur_ligase_C_dom_sf"/>
</dbReference>
<dbReference type="InterPro" id="IPR013221">
    <property type="entry name" value="Mur_ligase_cen"/>
</dbReference>
<dbReference type="InterPro" id="IPR005762">
    <property type="entry name" value="MurD"/>
</dbReference>
<dbReference type="NCBIfam" id="TIGR01087">
    <property type="entry name" value="murD"/>
    <property type="match status" value="1"/>
</dbReference>
<dbReference type="PANTHER" id="PTHR43692">
    <property type="entry name" value="UDP-N-ACETYLMURAMOYLALANINE--D-GLUTAMATE LIGASE"/>
    <property type="match status" value="1"/>
</dbReference>
<dbReference type="PANTHER" id="PTHR43692:SF1">
    <property type="entry name" value="UDP-N-ACETYLMURAMOYLALANINE--D-GLUTAMATE LIGASE"/>
    <property type="match status" value="1"/>
</dbReference>
<dbReference type="Pfam" id="PF02875">
    <property type="entry name" value="Mur_ligase_C"/>
    <property type="match status" value="1"/>
</dbReference>
<dbReference type="Pfam" id="PF08245">
    <property type="entry name" value="Mur_ligase_M"/>
    <property type="match status" value="1"/>
</dbReference>
<dbReference type="Pfam" id="PF21799">
    <property type="entry name" value="MurD-like_N"/>
    <property type="match status" value="1"/>
</dbReference>
<dbReference type="SUPFAM" id="SSF51984">
    <property type="entry name" value="MurCD N-terminal domain"/>
    <property type="match status" value="1"/>
</dbReference>
<dbReference type="SUPFAM" id="SSF53623">
    <property type="entry name" value="MurD-like peptide ligases, catalytic domain"/>
    <property type="match status" value="1"/>
</dbReference>
<dbReference type="SUPFAM" id="SSF53244">
    <property type="entry name" value="MurD-like peptide ligases, peptide-binding domain"/>
    <property type="match status" value="1"/>
</dbReference>
<gene>
    <name evidence="1" type="primary">murD</name>
    <name type="ordered locus">BCQ_3698</name>
</gene>
<reference key="1">
    <citation type="journal article" date="2009" name="J. Bacteriol.">
        <title>Complete genome sequence of the extremophilic Bacillus cereus strain Q1 with industrial applications.</title>
        <authorList>
            <person name="Xiong Z."/>
            <person name="Jiang Y."/>
            <person name="Qi D."/>
            <person name="Lu H."/>
            <person name="Yang F."/>
            <person name="Yang J."/>
            <person name="Chen L."/>
            <person name="Sun L."/>
            <person name="Xu X."/>
            <person name="Xue Y."/>
            <person name="Zhu Y."/>
            <person name="Jin Q."/>
        </authorList>
    </citation>
    <scope>NUCLEOTIDE SEQUENCE [LARGE SCALE GENOMIC DNA]</scope>
    <source>
        <strain>Q1</strain>
    </source>
</reference>
<organism>
    <name type="scientific">Bacillus cereus (strain Q1)</name>
    <dbReference type="NCBI Taxonomy" id="361100"/>
    <lineage>
        <taxon>Bacteria</taxon>
        <taxon>Bacillati</taxon>
        <taxon>Bacillota</taxon>
        <taxon>Bacilli</taxon>
        <taxon>Bacillales</taxon>
        <taxon>Bacillaceae</taxon>
        <taxon>Bacillus</taxon>
        <taxon>Bacillus cereus group</taxon>
    </lineage>
</organism>
<protein>
    <recommendedName>
        <fullName evidence="1">UDP-N-acetylmuramoylalanine--D-glutamate ligase</fullName>
        <ecNumber evidence="1">6.3.2.9</ecNumber>
    </recommendedName>
    <alternativeName>
        <fullName evidence="1">D-glutamic acid-adding enzyme</fullName>
    </alternativeName>
    <alternativeName>
        <fullName evidence="1">UDP-N-acetylmuramoyl-L-alanyl-D-glutamate synthetase</fullName>
    </alternativeName>
</protein>